<keyword id="KW-1185">Reference proteome</keyword>
<keyword id="KW-0687">Ribonucleoprotein</keyword>
<keyword id="KW-0689">Ribosomal protein</keyword>
<keyword id="KW-0694">RNA-binding</keyword>
<keyword id="KW-0699">rRNA-binding</keyword>
<feature type="chain" id="PRO_1000196247" description="Large ribosomal subunit protein bL9">
    <location>
        <begin position="1"/>
        <end position="149"/>
    </location>
</feature>
<name>RL9_GLAP5</name>
<protein>
    <recommendedName>
        <fullName evidence="1">Large ribosomal subunit protein bL9</fullName>
    </recommendedName>
    <alternativeName>
        <fullName evidence="2">50S ribosomal protein L9</fullName>
    </alternativeName>
</protein>
<dbReference type="EMBL" id="CP001321">
    <property type="protein sequence ID" value="ACL32686.1"/>
    <property type="molecule type" value="Genomic_DNA"/>
</dbReference>
<dbReference type="RefSeq" id="WP_015939606.1">
    <property type="nucleotide sequence ID" value="NC_011852.1"/>
</dbReference>
<dbReference type="SMR" id="B8F5T4"/>
<dbReference type="STRING" id="557723.HAPS_1068"/>
<dbReference type="KEGG" id="hap:HAPS_1068"/>
<dbReference type="PATRIC" id="fig|557723.8.peg.1064"/>
<dbReference type="HOGENOM" id="CLU_078938_4_1_6"/>
<dbReference type="Proteomes" id="UP000006743">
    <property type="component" value="Chromosome"/>
</dbReference>
<dbReference type="GO" id="GO:1990904">
    <property type="term" value="C:ribonucleoprotein complex"/>
    <property type="evidence" value="ECO:0007669"/>
    <property type="project" value="UniProtKB-KW"/>
</dbReference>
<dbReference type="GO" id="GO:0005840">
    <property type="term" value="C:ribosome"/>
    <property type="evidence" value="ECO:0007669"/>
    <property type="project" value="UniProtKB-KW"/>
</dbReference>
<dbReference type="GO" id="GO:0019843">
    <property type="term" value="F:rRNA binding"/>
    <property type="evidence" value="ECO:0007669"/>
    <property type="project" value="UniProtKB-UniRule"/>
</dbReference>
<dbReference type="GO" id="GO:0003735">
    <property type="term" value="F:structural constituent of ribosome"/>
    <property type="evidence" value="ECO:0007669"/>
    <property type="project" value="InterPro"/>
</dbReference>
<dbReference type="GO" id="GO:0006412">
    <property type="term" value="P:translation"/>
    <property type="evidence" value="ECO:0007669"/>
    <property type="project" value="UniProtKB-UniRule"/>
</dbReference>
<dbReference type="FunFam" id="3.40.5.10:FF:000001">
    <property type="entry name" value="50S ribosomal protein L9"/>
    <property type="match status" value="1"/>
</dbReference>
<dbReference type="Gene3D" id="3.10.430.100">
    <property type="entry name" value="Ribosomal protein L9, C-terminal domain"/>
    <property type="match status" value="1"/>
</dbReference>
<dbReference type="Gene3D" id="3.40.5.10">
    <property type="entry name" value="Ribosomal protein L9, N-terminal domain"/>
    <property type="match status" value="1"/>
</dbReference>
<dbReference type="HAMAP" id="MF_00503">
    <property type="entry name" value="Ribosomal_bL9"/>
    <property type="match status" value="1"/>
</dbReference>
<dbReference type="InterPro" id="IPR000244">
    <property type="entry name" value="Ribosomal_bL9"/>
</dbReference>
<dbReference type="InterPro" id="IPR009027">
    <property type="entry name" value="Ribosomal_bL9/RNase_H1_N"/>
</dbReference>
<dbReference type="InterPro" id="IPR020594">
    <property type="entry name" value="Ribosomal_bL9_bac/chp"/>
</dbReference>
<dbReference type="InterPro" id="IPR020069">
    <property type="entry name" value="Ribosomal_bL9_C"/>
</dbReference>
<dbReference type="InterPro" id="IPR036791">
    <property type="entry name" value="Ribosomal_bL9_C_sf"/>
</dbReference>
<dbReference type="InterPro" id="IPR020070">
    <property type="entry name" value="Ribosomal_bL9_N"/>
</dbReference>
<dbReference type="InterPro" id="IPR036935">
    <property type="entry name" value="Ribosomal_bL9_N_sf"/>
</dbReference>
<dbReference type="NCBIfam" id="TIGR00158">
    <property type="entry name" value="L9"/>
    <property type="match status" value="1"/>
</dbReference>
<dbReference type="PANTHER" id="PTHR21368">
    <property type="entry name" value="50S RIBOSOMAL PROTEIN L9"/>
    <property type="match status" value="1"/>
</dbReference>
<dbReference type="Pfam" id="PF03948">
    <property type="entry name" value="Ribosomal_L9_C"/>
    <property type="match status" value="1"/>
</dbReference>
<dbReference type="Pfam" id="PF01281">
    <property type="entry name" value="Ribosomal_L9_N"/>
    <property type="match status" value="1"/>
</dbReference>
<dbReference type="SUPFAM" id="SSF55658">
    <property type="entry name" value="L9 N-domain-like"/>
    <property type="match status" value="1"/>
</dbReference>
<dbReference type="SUPFAM" id="SSF55653">
    <property type="entry name" value="Ribosomal protein L9 C-domain"/>
    <property type="match status" value="1"/>
</dbReference>
<dbReference type="PROSITE" id="PS00651">
    <property type="entry name" value="RIBOSOMAL_L9"/>
    <property type="match status" value="1"/>
</dbReference>
<organism>
    <name type="scientific">Glaesserella parasuis serovar 5 (strain SH0165)</name>
    <name type="common">Haemophilus parasuis</name>
    <dbReference type="NCBI Taxonomy" id="557723"/>
    <lineage>
        <taxon>Bacteria</taxon>
        <taxon>Pseudomonadati</taxon>
        <taxon>Pseudomonadota</taxon>
        <taxon>Gammaproteobacteria</taxon>
        <taxon>Pasteurellales</taxon>
        <taxon>Pasteurellaceae</taxon>
        <taxon>Glaesserella</taxon>
    </lineage>
</organism>
<sequence>MQVILLDKVAQLGTVGDQVTVKAGFARNYLIPQGKAVMATAANIAHFEARRAELEAKAAEALSAAQARAAAIANLAAIVITSKAGDDGRLFGSVGVRDIAEAVSAAGVAVTKSEVRLPEGALRTIGEHEVKLHLHAEVNAVVTINVVSE</sequence>
<evidence type="ECO:0000255" key="1">
    <source>
        <dbReference type="HAMAP-Rule" id="MF_00503"/>
    </source>
</evidence>
<evidence type="ECO:0000305" key="2"/>
<accession>B8F5T4</accession>
<proteinExistence type="inferred from homology"/>
<gene>
    <name evidence="1" type="primary">rplI</name>
    <name type="ordered locus">HAPS_1068</name>
</gene>
<comment type="function">
    <text evidence="1">Binds to the 23S rRNA.</text>
</comment>
<comment type="similarity">
    <text evidence="1">Belongs to the bacterial ribosomal protein bL9 family.</text>
</comment>
<reference key="1">
    <citation type="journal article" date="2009" name="J. Bacteriol.">
        <title>Complete genome sequence of Haemophilus parasuis SH0165.</title>
        <authorList>
            <person name="Yue M."/>
            <person name="Yang F."/>
            <person name="Yang J."/>
            <person name="Bei W."/>
            <person name="Cai X."/>
            <person name="Chen L."/>
            <person name="Dong J."/>
            <person name="Zhou R."/>
            <person name="Jin M."/>
            <person name="Jin Q."/>
            <person name="Chen H."/>
        </authorList>
    </citation>
    <scope>NUCLEOTIDE SEQUENCE [LARGE SCALE GENOMIC DNA]</scope>
    <source>
        <strain>SH0165</strain>
    </source>
</reference>